<gene>
    <name type="primary">fnbA</name>
    <name type="ordered locus">SAV2503</name>
</gene>
<keyword id="KW-0130">Cell adhesion</keyword>
<keyword id="KW-0134">Cell wall</keyword>
<keyword id="KW-0572">Peptidoglycan-anchor</keyword>
<keyword id="KW-0677">Repeat</keyword>
<keyword id="KW-0964">Secreted</keyword>
<keyword id="KW-0732">Signal</keyword>
<keyword id="KW-0843">Virulence</keyword>
<dbReference type="EMBL" id="BA000017">
    <property type="protein sequence ID" value="BAB58665.1"/>
    <property type="molecule type" value="Genomic_DNA"/>
</dbReference>
<dbReference type="RefSeq" id="WP_000794614.1">
    <property type="nucleotide sequence ID" value="NC_002758.2"/>
</dbReference>
<dbReference type="SMR" id="Q99RD2"/>
<dbReference type="KEGG" id="sav:SAV2503"/>
<dbReference type="HOGENOM" id="CLU_009849_1_0_9"/>
<dbReference type="PhylomeDB" id="Q99RD2"/>
<dbReference type="Proteomes" id="UP000002481">
    <property type="component" value="Chromosome"/>
</dbReference>
<dbReference type="GO" id="GO:0005576">
    <property type="term" value="C:extracellular region"/>
    <property type="evidence" value="ECO:0007669"/>
    <property type="project" value="UniProtKB-KW"/>
</dbReference>
<dbReference type="GO" id="GO:0007155">
    <property type="term" value="P:cell adhesion"/>
    <property type="evidence" value="ECO:0007669"/>
    <property type="project" value="UniProtKB-KW"/>
</dbReference>
<dbReference type="Gene3D" id="2.60.40.1280">
    <property type="match status" value="1"/>
</dbReference>
<dbReference type="Gene3D" id="2.60.40.1290">
    <property type="match status" value="1"/>
</dbReference>
<dbReference type="InterPro" id="IPR011266">
    <property type="entry name" value="Adhesin_Fg-bd_dom_2"/>
</dbReference>
<dbReference type="InterPro" id="IPR008966">
    <property type="entry name" value="Adhesion_dom_sf"/>
</dbReference>
<dbReference type="InterPro" id="IPR011252">
    <property type="entry name" value="Fibrogen-bd_dom1"/>
</dbReference>
<dbReference type="InterPro" id="IPR004237">
    <property type="entry name" value="Fibron_repeat-bd"/>
</dbReference>
<dbReference type="InterPro" id="IPR019931">
    <property type="entry name" value="LPXTG_anchor"/>
</dbReference>
<dbReference type="InterPro" id="IPR041171">
    <property type="entry name" value="SDR_Ig"/>
</dbReference>
<dbReference type="InterPro" id="IPR005877">
    <property type="entry name" value="YSIRK_signal_dom"/>
</dbReference>
<dbReference type="NCBIfam" id="TIGR01167">
    <property type="entry name" value="LPXTG_anchor"/>
    <property type="match status" value="1"/>
</dbReference>
<dbReference type="NCBIfam" id="TIGR01168">
    <property type="entry name" value="YSIRK_signal"/>
    <property type="match status" value="1"/>
</dbReference>
<dbReference type="PANTHER" id="PTHR24216:SF65">
    <property type="entry name" value="PAXILLIN-LIKE PROTEIN 1"/>
    <property type="match status" value="1"/>
</dbReference>
<dbReference type="PANTHER" id="PTHR24216">
    <property type="entry name" value="PAXILLIN-RELATED"/>
    <property type="match status" value="1"/>
</dbReference>
<dbReference type="Pfam" id="PF17961">
    <property type="entry name" value="Big_8"/>
    <property type="match status" value="1"/>
</dbReference>
<dbReference type="Pfam" id="PF02986">
    <property type="entry name" value="Fn_bind"/>
    <property type="match status" value="3"/>
</dbReference>
<dbReference type="Pfam" id="PF00746">
    <property type="entry name" value="Gram_pos_anchor"/>
    <property type="match status" value="1"/>
</dbReference>
<dbReference type="Pfam" id="PF10425">
    <property type="entry name" value="SdrG_C_C"/>
    <property type="match status" value="1"/>
</dbReference>
<dbReference type="Pfam" id="PF04650">
    <property type="entry name" value="YSIRK_signal"/>
    <property type="match status" value="1"/>
</dbReference>
<dbReference type="PRINTS" id="PR01217">
    <property type="entry name" value="PRICHEXTENSN"/>
</dbReference>
<dbReference type="SUPFAM" id="SSF49401">
    <property type="entry name" value="Bacterial adhesins"/>
    <property type="match status" value="2"/>
</dbReference>
<dbReference type="PROSITE" id="PS50847">
    <property type="entry name" value="GRAM_POS_ANCHORING"/>
    <property type="match status" value="1"/>
</dbReference>
<name>FNBA_STAAM</name>
<protein>
    <recommendedName>
        <fullName>Fibronectin-binding protein A</fullName>
    </recommendedName>
</protein>
<comment type="function">
    <text evidence="1">Promotes bacterial attachment to multiple substrates, such as fibronectin (Fn), fibrinogen (Fg), elastin peptides and tropoelastin. This confers to S.aureus the ability to invade endothelial cells. Promotes adherence to and aggregation of activated platelets (By similarity).</text>
</comment>
<comment type="subcellular location">
    <subcellularLocation>
        <location evidence="4">Secreted</location>
        <location evidence="4">Cell wall</location>
        <topology evidence="4">Peptidoglycan-anchor</topology>
    </subcellularLocation>
    <text evidence="2">Anchored to the cell wall by sortase A (By similarity).</text>
</comment>
<proteinExistence type="inferred from homology"/>
<reference key="1">
    <citation type="journal article" date="2001" name="Lancet">
        <title>Whole genome sequencing of meticillin-resistant Staphylococcus aureus.</title>
        <authorList>
            <person name="Kuroda M."/>
            <person name="Ohta T."/>
            <person name="Uchiyama I."/>
            <person name="Baba T."/>
            <person name="Yuzawa H."/>
            <person name="Kobayashi I."/>
            <person name="Cui L."/>
            <person name="Oguchi A."/>
            <person name="Aoki K."/>
            <person name="Nagai Y."/>
            <person name="Lian J.-Q."/>
            <person name="Ito T."/>
            <person name="Kanamori M."/>
            <person name="Matsumaru H."/>
            <person name="Maruyama A."/>
            <person name="Murakami H."/>
            <person name="Hosoyama A."/>
            <person name="Mizutani-Ui Y."/>
            <person name="Takahashi N.K."/>
            <person name="Sawano T."/>
            <person name="Inoue R."/>
            <person name="Kaito C."/>
            <person name="Sekimizu K."/>
            <person name="Hirakawa H."/>
            <person name="Kuhara S."/>
            <person name="Goto S."/>
            <person name="Yabuzaki J."/>
            <person name="Kanehisa M."/>
            <person name="Yamashita A."/>
            <person name="Oshima K."/>
            <person name="Furuya K."/>
            <person name="Yoshino C."/>
            <person name="Shiba T."/>
            <person name="Hattori M."/>
            <person name="Ogasawara N."/>
            <person name="Hayashi H."/>
            <person name="Hiramatsu K."/>
        </authorList>
    </citation>
    <scope>NUCLEOTIDE SEQUENCE [LARGE SCALE GENOMIC DNA]</scope>
    <source>
        <strain>Mu50 / ATCC 700699</strain>
    </source>
</reference>
<sequence>MKNNLRYGIRKHKLGAASVFLGTMIVVGMGQDKEAAASEQKTTTVEENGNSATDNKTSETQTTATNVNHIEETQSYNATVTEQPSNATQVTTEEAPKAVQAPQTAQPANVETVKEEEKPQVKETTQPQDNSGNQRQVDLTPKKVTQNQGTETQVEVAQPRTASESKPRVTRSADVAEAKEASDVSEVKGTDVTSKVTVESGSIEAPQGNKVEPHAGQRVVLKYKLKFADGLKRGDYFDFTLSNNVNTYGVSTARKVPEIKNGSVVMATGEILGNGNIRYTFTNEIEHKVEVTANLEINLFIDPKTVQSNGEQKITSKLNGEETEKTIPVVYNPGVSNSYTNVNGSIETFNKESNKFTHIAYIKPMNGNQSNTVSVTGTLTEGSNLAGGQPTVKVYEYLGKKDELPQSVYANTSDTNKFKDVTKEMNGKLSVQDNGSYSLNLDKLDKTYVIHYTGEYLQGSDQVNFRTELYGYPERAYKSYYVYGGYRLTWDNGLVLYSNKADGNGKNGQIIQDNDFEYKEDTAKGTMSGQYDAKQIIETEENQDNTPLDIDYHTAIDGEGGYVDGYIETIEETDSSAIDIDYHTAVDSEVGHVGGYTESSEESNPIDFEESTHENSKHHADVVEYEEDTNPGGGQVTTESNLVEFDEESTKGIVTGAVSDHTTIEDTKEYTTESNLIELVDELPEEHGQAQGPIEEITENNHHISHSGLGTENGHGNYGVIEEIEENSHVDIKSELGYEGGQNSGNQSFEEDTEEDKPKYEQGGNIVDIDFDSVPQIHGQNKGDQSFEEDTEKDKPKYEHGGNIIDIDFDSVPQIHGFNKHNEIIEEDTNKDKPNYQFGGHNSVDFEEDTLPKVSGQNEGQQTIEEDTTPPTPPTPEVPSEPETPMPPTPEVPSEPETPTPPTPEVPSEPETPTPPTPEVPSEPETPTPPTPEVPSEPETPTPPTPEVPAEPGKPVPPAKEEPKKPSKPVEQGKVVTPVIEINEKVKAVAPTKKAQSKKSELPETGGEESTNKGMLFGGLFSILGLALLRRNKKNNKA</sequence>
<feature type="signal peptide" evidence="3">
    <location>
        <begin position="1"/>
        <end position="36"/>
    </location>
</feature>
<feature type="chain" id="PRO_0000313880" description="Fibronectin-binding protein A">
    <location>
        <begin position="37"/>
        <end position="1005"/>
    </location>
</feature>
<feature type="propeptide" id="PRO_0000313881" description="Removed by sortase" evidence="4">
    <location>
        <begin position="1006"/>
        <end position="1038"/>
    </location>
</feature>
<feature type="repeat" description="B-1">
    <location>
        <begin position="541"/>
        <end position="570"/>
    </location>
</feature>
<feature type="repeat" description="B-2">
    <location>
        <begin position="571"/>
        <end position="600"/>
    </location>
</feature>
<feature type="repeat" description="D-1">
    <location>
        <begin position="741"/>
        <end position="778"/>
    </location>
</feature>
<feature type="repeat" description="D-2">
    <location>
        <begin position="779"/>
        <end position="816"/>
    </location>
</feature>
<feature type="repeat" description="D-3">
    <location>
        <begin position="817"/>
        <end position="855"/>
    </location>
</feature>
<feature type="repeat" description="D-4">
    <location>
        <begin position="856"/>
        <end position="898"/>
    </location>
</feature>
<feature type="repeat" description="WR 1">
    <location>
        <begin position="899"/>
        <end position="912"/>
    </location>
</feature>
<feature type="repeat" description="WR 2">
    <location>
        <begin position="913"/>
        <end position="926"/>
    </location>
</feature>
<feature type="repeat" description="WR 3">
    <location>
        <begin position="927"/>
        <end position="940"/>
    </location>
</feature>
<feature type="repeat" description="WR 4">
    <location>
        <begin position="941"/>
        <end position="954"/>
    </location>
</feature>
<feature type="repeat" description="WR 5">
    <location>
        <begin position="955"/>
        <end position="968"/>
    </location>
</feature>
<feature type="region of interest" description="Ligand-binding A region">
    <location>
        <begin position="37"/>
        <end position="507"/>
    </location>
</feature>
<feature type="region of interest" description="Disordered" evidence="5">
    <location>
        <begin position="37"/>
        <end position="193"/>
    </location>
</feature>
<feature type="region of interest" description="Fibrinogen/elastin/tropoelastin-binding" evidence="1">
    <location>
        <begin position="189"/>
        <end position="507"/>
    </location>
</feature>
<feature type="region of interest" description="Fibronectin-binding" evidence="1">
    <location>
        <begin position="508"/>
        <end position="868"/>
    </location>
</feature>
<feature type="region of interest" description="2 X approximate tandem repeats">
    <location>
        <begin position="541"/>
        <end position="600"/>
    </location>
</feature>
<feature type="region of interest" description="Disordered" evidence="5">
    <location>
        <begin position="736"/>
        <end position="804"/>
    </location>
</feature>
<feature type="region of interest" description="4 X approximate tandem repeats">
    <location>
        <begin position="741"/>
        <end position="898"/>
    </location>
</feature>
<feature type="region of interest" description="Disordered" evidence="5">
    <location>
        <begin position="825"/>
        <end position="976"/>
    </location>
</feature>
<feature type="region of interest" description="5 X tandem repeats, Pro-rich (WR)">
    <location>
        <begin position="899"/>
        <end position="968"/>
    </location>
</feature>
<feature type="region of interest" description="Disordered" evidence="5">
    <location>
        <begin position="989"/>
        <end position="1015"/>
    </location>
</feature>
<feature type="short sequence motif" description="YSIRK-G/S signaling motif" evidence="2">
    <location>
        <begin position="7"/>
        <end position="18"/>
    </location>
</feature>
<feature type="short sequence motif" description="LPXTG sorting signal" evidence="4">
    <location>
        <begin position="1002"/>
        <end position="1006"/>
    </location>
</feature>
<feature type="compositionally biased region" description="Polar residues" evidence="5">
    <location>
        <begin position="39"/>
        <end position="92"/>
    </location>
</feature>
<feature type="compositionally biased region" description="Basic and acidic residues" evidence="5">
    <location>
        <begin position="112"/>
        <end position="121"/>
    </location>
</feature>
<feature type="compositionally biased region" description="Polar residues" evidence="5">
    <location>
        <begin position="122"/>
        <end position="164"/>
    </location>
</feature>
<feature type="compositionally biased region" description="Basic and acidic residues" evidence="5">
    <location>
        <begin position="174"/>
        <end position="189"/>
    </location>
</feature>
<feature type="compositionally biased region" description="Basic and acidic residues" evidence="5">
    <location>
        <begin position="825"/>
        <end position="834"/>
    </location>
</feature>
<feature type="compositionally biased region" description="Pro residues" evidence="5">
    <location>
        <begin position="870"/>
        <end position="958"/>
    </location>
</feature>
<feature type="modified residue" description="Pentaglycyl murein peptidoglycan amidated threonine" evidence="4">
    <location>
        <position position="1005"/>
    </location>
</feature>
<organism>
    <name type="scientific">Staphylococcus aureus (strain Mu50 / ATCC 700699)</name>
    <dbReference type="NCBI Taxonomy" id="158878"/>
    <lineage>
        <taxon>Bacteria</taxon>
        <taxon>Bacillati</taxon>
        <taxon>Bacillota</taxon>
        <taxon>Bacilli</taxon>
        <taxon>Bacillales</taxon>
        <taxon>Staphylococcaceae</taxon>
        <taxon>Staphylococcus</taxon>
    </lineage>
</organism>
<accession>Q99RD2</accession>
<evidence type="ECO:0000250" key="1"/>
<evidence type="ECO:0000250" key="2">
    <source>
        <dbReference type="UniProtKB" id="P14738"/>
    </source>
</evidence>
<evidence type="ECO:0000255" key="3"/>
<evidence type="ECO:0000255" key="4">
    <source>
        <dbReference type="PROSITE-ProRule" id="PRU00477"/>
    </source>
</evidence>
<evidence type="ECO:0000256" key="5">
    <source>
        <dbReference type="SAM" id="MobiDB-lite"/>
    </source>
</evidence>